<proteinExistence type="inferred from homology"/>
<sequence length="199" mass="22832">MSKQNKKDWKKFRDEHKEEHKVENEILEEETDEESQHQEPALGHPSYTALEEQLTLAEQKAHENWEKSVRALAELENVRRRMEREVANAHKYGVEKLISALLPVVDSLEQALQLADKNSDPSMHEGLELTMKLFLDALQKFDVEQIDPLGQTFDPQQHEAMSMQPAPGAPPNSVITVFQKGYKLSDRVIRPARVIVSTK</sequence>
<gene>
    <name evidence="1" type="primary">grpE</name>
    <name type="ordered locus">lpl2003</name>
</gene>
<reference key="1">
    <citation type="journal article" date="2004" name="Nat. Genet.">
        <title>Evidence in the Legionella pneumophila genome for exploitation of host cell functions and high genome plasticity.</title>
        <authorList>
            <person name="Cazalet C."/>
            <person name="Rusniok C."/>
            <person name="Brueggemann H."/>
            <person name="Zidane N."/>
            <person name="Magnier A."/>
            <person name="Ma L."/>
            <person name="Tichit M."/>
            <person name="Jarraud S."/>
            <person name="Bouchier C."/>
            <person name="Vandenesch F."/>
            <person name="Kunst F."/>
            <person name="Etienne J."/>
            <person name="Glaser P."/>
            <person name="Buchrieser C."/>
        </authorList>
    </citation>
    <scope>NUCLEOTIDE SEQUENCE [LARGE SCALE GENOMIC DNA]</scope>
    <source>
        <strain>Lens</strain>
    </source>
</reference>
<keyword id="KW-0143">Chaperone</keyword>
<keyword id="KW-0963">Cytoplasm</keyword>
<keyword id="KW-0346">Stress response</keyword>
<feature type="chain" id="PRO_1000053598" description="Protein GrpE">
    <location>
        <begin position="1"/>
        <end position="199"/>
    </location>
</feature>
<feature type="region of interest" description="Disordered" evidence="2">
    <location>
        <begin position="1"/>
        <end position="52"/>
    </location>
</feature>
<feature type="compositionally biased region" description="Basic and acidic residues" evidence="2">
    <location>
        <begin position="1"/>
        <end position="24"/>
    </location>
</feature>
<dbReference type="EMBL" id="CR628337">
    <property type="protein sequence ID" value="CAH16243.1"/>
    <property type="molecule type" value="Genomic_DNA"/>
</dbReference>
<dbReference type="RefSeq" id="WP_011215986.1">
    <property type="nucleotide sequence ID" value="NC_006369.1"/>
</dbReference>
<dbReference type="SMR" id="Q5WV14"/>
<dbReference type="KEGG" id="lpf:lpl2003"/>
<dbReference type="LegioList" id="lpl2003"/>
<dbReference type="HOGENOM" id="CLU_057217_6_0_6"/>
<dbReference type="Proteomes" id="UP000002517">
    <property type="component" value="Chromosome"/>
</dbReference>
<dbReference type="GO" id="GO:0005829">
    <property type="term" value="C:cytosol"/>
    <property type="evidence" value="ECO:0007669"/>
    <property type="project" value="TreeGrafter"/>
</dbReference>
<dbReference type="GO" id="GO:0000774">
    <property type="term" value="F:adenyl-nucleotide exchange factor activity"/>
    <property type="evidence" value="ECO:0007669"/>
    <property type="project" value="InterPro"/>
</dbReference>
<dbReference type="GO" id="GO:0042803">
    <property type="term" value="F:protein homodimerization activity"/>
    <property type="evidence" value="ECO:0007669"/>
    <property type="project" value="InterPro"/>
</dbReference>
<dbReference type="GO" id="GO:0051087">
    <property type="term" value="F:protein-folding chaperone binding"/>
    <property type="evidence" value="ECO:0007669"/>
    <property type="project" value="InterPro"/>
</dbReference>
<dbReference type="GO" id="GO:0051082">
    <property type="term" value="F:unfolded protein binding"/>
    <property type="evidence" value="ECO:0007669"/>
    <property type="project" value="TreeGrafter"/>
</dbReference>
<dbReference type="GO" id="GO:0006457">
    <property type="term" value="P:protein folding"/>
    <property type="evidence" value="ECO:0007669"/>
    <property type="project" value="InterPro"/>
</dbReference>
<dbReference type="CDD" id="cd00446">
    <property type="entry name" value="GrpE"/>
    <property type="match status" value="1"/>
</dbReference>
<dbReference type="FunFam" id="2.30.22.10:FF:000001">
    <property type="entry name" value="Protein GrpE"/>
    <property type="match status" value="1"/>
</dbReference>
<dbReference type="Gene3D" id="3.90.20.20">
    <property type="match status" value="1"/>
</dbReference>
<dbReference type="Gene3D" id="2.30.22.10">
    <property type="entry name" value="Head domain of nucleotide exchange factor GrpE"/>
    <property type="match status" value="1"/>
</dbReference>
<dbReference type="HAMAP" id="MF_01151">
    <property type="entry name" value="GrpE"/>
    <property type="match status" value="1"/>
</dbReference>
<dbReference type="InterPro" id="IPR000740">
    <property type="entry name" value="GrpE"/>
</dbReference>
<dbReference type="InterPro" id="IPR013805">
    <property type="entry name" value="GrpE_coiled_coil"/>
</dbReference>
<dbReference type="InterPro" id="IPR009012">
    <property type="entry name" value="GrpE_head"/>
</dbReference>
<dbReference type="NCBIfam" id="NF010737">
    <property type="entry name" value="PRK14139.1"/>
    <property type="match status" value="1"/>
</dbReference>
<dbReference type="NCBIfam" id="NF010738">
    <property type="entry name" value="PRK14140.1"/>
    <property type="match status" value="1"/>
</dbReference>
<dbReference type="NCBIfam" id="NF010742">
    <property type="entry name" value="PRK14144.1"/>
    <property type="match status" value="1"/>
</dbReference>
<dbReference type="NCBIfam" id="NF010748">
    <property type="entry name" value="PRK14150.1"/>
    <property type="match status" value="1"/>
</dbReference>
<dbReference type="PANTHER" id="PTHR21237">
    <property type="entry name" value="GRPE PROTEIN"/>
    <property type="match status" value="1"/>
</dbReference>
<dbReference type="PANTHER" id="PTHR21237:SF23">
    <property type="entry name" value="GRPE PROTEIN HOMOLOG, MITOCHONDRIAL"/>
    <property type="match status" value="1"/>
</dbReference>
<dbReference type="Pfam" id="PF01025">
    <property type="entry name" value="GrpE"/>
    <property type="match status" value="1"/>
</dbReference>
<dbReference type="PRINTS" id="PR00773">
    <property type="entry name" value="GRPEPROTEIN"/>
</dbReference>
<dbReference type="SUPFAM" id="SSF58014">
    <property type="entry name" value="Coiled-coil domain of nucleotide exchange factor GrpE"/>
    <property type="match status" value="1"/>
</dbReference>
<dbReference type="SUPFAM" id="SSF51064">
    <property type="entry name" value="Head domain of nucleotide exchange factor GrpE"/>
    <property type="match status" value="1"/>
</dbReference>
<dbReference type="PROSITE" id="PS01071">
    <property type="entry name" value="GRPE"/>
    <property type="match status" value="1"/>
</dbReference>
<protein>
    <recommendedName>
        <fullName evidence="1">Protein GrpE</fullName>
    </recommendedName>
    <alternativeName>
        <fullName evidence="1">HSP-70 cofactor</fullName>
    </alternativeName>
</protein>
<accession>Q5WV14</accession>
<evidence type="ECO:0000255" key="1">
    <source>
        <dbReference type="HAMAP-Rule" id="MF_01151"/>
    </source>
</evidence>
<evidence type="ECO:0000256" key="2">
    <source>
        <dbReference type="SAM" id="MobiDB-lite"/>
    </source>
</evidence>
<comment type="function">
    <text evidence="1">Participates actively in the response to hyperosmotic and heat shock by preventing the aggregation of stress-denatured proteins, in association with DnaK and GrpE. It is the nucleotide exchange factor for DnaK and may function as a thermosensor. Unfolded proteins bind initially to DnaJ; upon interaction with the DnaJ-bound protein, DnaK hydrolyzes its bound ATP, resulting in the formation of a stable complex. GrpE releases ADP from DnaK; ATP binding to DnaK triggers the release of the substrate protein, thus completing the reaction cycle. Several rounds of ATP-dependent interactions between DnaJ, DnaK and GrpE are required for fully efficient folding.</text>
</comment>
<comment type="subunit">
    <text evidence="1">Homodimer.</text>
</comment>
<comment type="subcellular location">
    <subcellularLocation>
        <location evidence="1">Cytoplasm</location>
    </subcellularLocation>
</comment>
<comment type="similarity">
    <text evidence="1">Belongs to the GrpE family.</text>
</comment>
<name>GRPE_LEGPL</name>
<organism>
    <name type="scientific">Legionella pneumophila (strain Lens)</name>
    <dbReference type="NCBI Taxonomy" id="297245"/>
    <lineage>
        <taxon>Bacteria</taxon>
        <taxon>Pseudomonadati</taxon>
        <taxon>Pseudomonadota</taxon>
        <taxon>Gammaproteobacteria</taxon>
        <taxon>Legionellales</taxon>
        <taxon>Legionellaceae</taxon>
        <taxon>Legionella</taxon>
    </lineage>
</organism>